<proteinExistence type="inferred from homology"/>
<evidence type="ECO:0000255" key="1">
    <source>
        <dbReference type="HAMAP-Rule" id="MF_00536"/>
    </source>
</evidence>
<sequence>MTEARPIILTCGEPAGVGPELAPKALASGVPFVFLGDPRHLPEGTAWAEVTAPGEPVADGVLAVLRHDFPAPARPGQPDPANAPAVIEVIARAVDLAMSGAAGGICTLPINKEALKRGAGFGFPGHTEYLAHLAGDVPVVMMLASTTVQPPCRVVPVTIHIPLSEVPLALTPLRLEQAIRITDAAMRRDFGLAQPRLAIAGLNPHAGENGVMGDEEARWMAPLIERLRREGFDLRGPLPADTMFHPAARARYDAALCAYHDQALIPIKTLDFAGGVNITLGLPFVRTSPDHGTAFDIAGQGIADAESVIAALRMAHEMAARR</sequence>
<name>PDXA_PARDP</name>
<keyword id="KW-0170">Cobalt</keyword>
<keyword id="KW-0963">Cytoplasm</keyword>
<keyword id="KW-0460">Magnesium</keyword>
<keyword id="KW-0479">Metal-binding</keyword>
<keyword id="KW-0520">NAD</keyword>
<keyword id="KW-0521">NADP</keyword>
<keyword id="KW-0560">Oxidoreductase</keyword>
<keyword id="KW-0664">Pyridoxine biosynthesis</keyword>
<keyword id="KW-1185">Reference proteome</keyword>
<keyword id="KW-0862">Zinc</keyword>
<accession>A1B0G5</accession>
<gene>
    <name evidence="1" type="primary">pdxA</name>
    <name type="ordered locus">Pden_0898</name>
</gene>
<organism>
    <name type="scientific">Paracoccus denitrificans (strain Pd 1222)</name>
    <dbReference type="NCBI Taxonomy" id="318586"/>
    <lineage>
        <taxon>Bacteria</taxon>
        <taxon>Pseudomonadati</taxon>
        <taxon>Pseudomonadota</taxon>
        <taxon>Alphaproteobacteria</taxon>
        <taxon>Rhodobacterales</taxon>
        <taxon>Paracoccaceae</taxon>
        <taxon>Paracoccus</taxon>
    </lineage>
</organism>
<comment type="function">
    <text evidence="1">Catalyzes the NAD(P)-dependent oxidation of 4-(phosphooxy)-L-threonine (HTP) into 2-amino-3-oxo-4-(phosphooxy)butyric acid which spontaneously decarboxylates to form 3-amino-2-oxopropyl phosphate (AHAP).</text>
</comment>
<comment type="catalytic activity">
    <reaction evidence="1">
        <text>4-(phosphooxy)-L-threonine + NAD(+) = 3-amino-2-oxopropyl phosphate + CO2 + NADH</text>
        <dbReference type="Rhea" id="RHEA:32275"/>
        <dbReference type="ChEBI" id="CHEBI:16526"/>
        <dbReference type="ChEBI" id="CHEBI:57279"/>
        <dbReference type="ChEBI" id="CHEBI:57540"/>
        <dbReference type="ChEBI" id="CHEBI:57945"/>
        <dbReference type="ChEBI" id="CHEBI:58452"/>
        <dbReference type="EC" id="1.1.1.262"/>
    </reaction>
</comment>
<comment type="cofactor">
    <cofactor evidence="1">
        <name>Zn(2+)</name>
        <dbReference type="ChEBI" id="CHEBI:29105"/>
    </cofactor>
    <cofactor evidence="1">
        <name>Mg(2+)</name>
        <dbReference type="ChEBI" id="CHEBI:18420"/>
    </cofactor>
    <cofactor evidence="1">
        <name>Co(2+)</name>
        <dbReference type="ChEBI" id="CHEBI:48828"/>
    </cofactor>
    <text evidence="1">Binds 1 divalent metal cation per subunit. Can use ions such as Zn(2+), Mg(2+) or Co(2+).</text>
</comment>
<comment type="pathway">
    <text evidence="1">Cofactor biosynthesis; pyridoxine 5'-phosphate biosynthesis; pyridoxine 5'-phosphate from D-erythrose 4-phosphate: step 4/5.</text>
</comment>
<comment type="subunit">
    <text evidence="1">Homodimer.</text>
</comment>
<comment type="subcellular location">
    <subcellularLocation>
        <location evidence="1">Cytoplasm</location>
    </subcellularLocation>
</comment>
<comment type="miscellaneous">
    <text evidence="1">The active site is located at the dimer interface.</text>
</comment>
<comment type="similarity">
    <text evidence="1">Belongs to the PdxA family.</text>
</comment>
<dbReference type="EC" id="1.1.1.262" evidence="1"/>
<dbReference type="EMBL" id="CP000489">
    <property type="protein sequence ID" value="ABL69009.1"/>
    <property type="molecule type" value="Genomic_DNA"/>
</dbReference>
<dbReference type="RefSeq" id="WP_011747237.1">
    <property type="nucleotide sequence ID" value="NC_008686.1"/>
</dbReference>
<dbReference type="SMR" id="A1B0G5"/>
<dbReference type="STRING" id="318586.Pden_0898"/>
<dbReference type="EnsemblBacteria" id="ABL69009">
    <property type="protein sequence ID" value="ABL69009"/>
    <property type="gene ID" value="Pden_0898"/>
</dbReference>
<dbReference type="GeneID" id="93452120"/>
<dbReference type="KEGG" id="pde:Pden_0898"/>
<dbReference type="eggNOG" id="COG1995">
    <property type="taxonomic scope" value="Bacteria"/>
</dbReference>
<dbReference type="HOGENOM" id="CLU_040168_1_0_5"/>
<dbReference type="OrthoDB" id="9801783at2"/>
<dbReference type="UniPathway" id="UPA00244">
    <property type="reaction ID" value="UER00312"/>
</dbReference>
<dbReference type="Proteomes" id="UP000000361">
    <property type="component" value="Chromosome 1"/>
</dbReference>
<dbReference type="GO" id="GO:0005737">
    <property type="term" value="C:cytoplasm"/>
    <property type="evidence" value="ECO:0007669"/>
    <property type="project" value="UniProtKB-SubCell"/>
</dbReference>
<dbReference type="GO" id="GO:0050570">
    <property type="term" value="F:4-hydroxythreonine-4-phosphate dehydrogenase activity"/>
    <property type="evidence" value="ECO:0007669"/>
    <property type="project" value="UniProtKB-UniRule"/>
</dbReference>
<dbReference type="GO" id="GO:0050897">
    <property type="term" value="F:cobalt ion binding"/>
    <property type="evidence" value="ECO:0007669"/>
    <property type="project" value="UniProtKB-UniRule"/>
</dbReference>
<dbReference type="GO" id="GO:0000287">
    <property type="term" value="F:magnesium ion binding"/>
    <property type="evidence" value="ECO:0007669"/>
    <property type="project" value="UniProtKB-UniRule"/>
</dbReference>
<dbReference type="GO" id="GO:0051287">
    <property type="term" value="F:NAD binding"/>
    <property type="evidence" value="ECO:0007669"/>
    <property type="project" value="InterPro"/>
</dbReference>
<dbReference type="GO" id="GO:0008270">
    <property type="term" value="F:zinc ion binding"/>
    <property type="evidence" value="ECO:0007669"/>
    <property type="project" value="UniProtKB-UniRule"/>
</dbReference>
<dbReference type="GO" id="GO:0042823">
    <property type="term" value="P:pyridoxal phosphate biosynthetic process"/>
    <property type="evidence" value="ECO:0007669"/>
    <property type="project" value="UniProtKB-UniRule"/>
</dbReference>
<dbReference type="GO" id="GO:0008615">
    <property type="term" value="P:pyridoxine biosynthetic process"/>
    <property type="evidence" value="ECO:0007669"/>
    <property type="project" value="UniProtKB-UniRule"/>
</dbReference>
<dbReference type="Gene3D" id="3.40.718.10">
    <property type="entry name" value="Isopropylmalate Dehydrogenase"/>
    <property type="match status" value="1"/>
</dbReference>
<dbReference type="HAMAP" id="MF_00536">
    <property type="entry name" value="PdxA"/>
    <property type="match status" value="1"/>
</dbReference>
<dbReference type="InterPro" id="IPR037510">
    <property type="entry name" value="PdxA"/>
</dbReference>
<dbReference type="InterPro" id="IPR005255">
    <property type="entry name" value="PdxA_fam"/>
</dbReference>
<dbReference type="NCBIfam" id="TIGR00557">
    <property type="entry name" value="pdxA"/>
    <property type="match status" value="1"/>
</dbReference>
<dbReference type="NCBIfam" id="NF003699">
    <property type="entry name" value="PRK05312.1"/>
    <property type="match status" value="1"/>
</dbReference>
<dbReference type="PANTHER" id="PTHR30004">
    <property type="entry name" value="4-HYDROXYTHREONINE-4-PHOSPHATE DEHYDROGENASE"/>
    <property type="match status" value="1"/>
</dbReference>
<dbReference type="PANTHER" id="PTHR30004:SF6">
    <property type="entry name" value="D-THREONATE 4-PHOSPHATE DEHYDROGENASE"/>
    <property type="match status" value="1"/>
</dbReference>
<dbReference type="Pfam" id="PF04166">
    <property type="entry name" value="PdxA"/>
    <property type="match status" value="1"/>
</dbReference>
<dbReference type="SUPFAM" id="SSF53659">
    <property type="entry name" value="Isocitrate/Isopropylmalate dehydrogenase-like"/>
    <property type="match status" value="1"/>
</dbReference>
<reference key="1">
    <citation type="submission" date="2006-12" db="EMBL/GenBank/DDBJ databases">
        <title>Complete sequence of chromosome 1 of Paracoccus denitrificans PD1222.</title>
        <authorList>
            <person name="Copeland A."/>
            <person name="Lucas S."/>
            <person name="Lapidus A."/>
            <person name="Barry K."/>
            <person name="Detter J.C."/>
            <person name="Glavina del Rio T."/>
            <person name="Hammon N."/>
            <person name="Israni S."/>
            <person name="Dalin E."/>
            <person name="Tice H."/>
            <person name="Pitluck S."/>
            <person name="Munk A.C."/>
            <person name="Brettin T."/>
            <person name="Bruce D."/>
            <person name="Han C."/>
            <person name="Tapia R."/>
            <person name="Gilna P."/>
            <person name="Schmutz J."/>
            <person name="Larimer F."/>
            <person name="Land M."/>
            <person name="Hauser L."/>
            <person name="Kyrpides N."/>
            <person name="Lykidis A."/>
            <person name="Spiro S."/>
            <person name="Richardson D.J."/>
            <person name="Moir J.W.B."/>
            <person name="Ferguson S.J."/>
            <person name="van Spanning R.J.M."/>
            <person name="Richardson P."/>
        </authorList>
    </citation>
    <scope>NUCLEOTIDE SEQUENCE [LARGE SCALE GENOMIC DNA]</scope>
    <source>
        <strain>Pd 1222</strain>
    </source>
</reference>
<feature type="chain" id="PRO_1000128256" description="4-hydroxythreonine-4-phosphate dehydrogenase">
    <location>
        <begin position="1"/>
        <end position="322"/>
    </location>
</feature>
<feature type="binding site" evidence="1">
    <location>
        <position position="126"/>
    </location>
    <ligand>
        <name>substrate</name>
    </ligand>
</feature>
<feature type="binding site" evidence="1">
    <location>
        <position position="127"/>
    </location>
    <ligand>
        <name>substrate</name>
    </ligand>
</feature>
<feature type="binding site" evidence="1">
    <location>
        <position position="160"/>
    </location>
    <ligand>
        <name>a divalent metal cation</name>
        <dbReference type="ChEBI" id="CHEBI:60240"/>
        <note>ligand shared between dimeric partners</note>
    </ligand>
</feature>
<feature type="binding site" evidence="1">
    <location>
        <position position="205"/>
    </location>
    <ligand>
        <name>a divalent metal cation</name>
        <dbReference type="ChEBI" id="CHEBI:60240"/>
        <note>ligand shared between dimeric partners</note>
    </ligand>
</feature>
<feature type="binding site" evidence="1">
    <location>
        <position position="260"/>
    </location>
    <ligand>
        <name>a divalent metal cation</name>
        <dbReference type="ChEBI" id="CHEBI:60240"/>
        <note>ligand shared between dimeric partners</note>
    </ligand>
</feature>
<feature type="binding site" evidence="1">
    <location>
        <position position="268"/>
    </location>
    <ligand>
        <name>substrate</name>
    </ligand>
</feature>
<feature type="binding site" evidence="1">
    <location>
        <position position="277"/>
    </location>
    <ligand>
        <name>substrate</name>
    </ligand>
</feature>
<feature type="binding site" evidence="1">
    <location>
        <position position="286"/>
    </location>
    <ligand>
        <name>substrate</name>
    </ligand>
</feature>
<protein>
    <recommendedName>
        <fullName evidence="1">4-hydroxythreonine-4-phosphate dehydrogenase</fullName>
        <ecNumber evidence="1">1.1.1.262</ecNumber>
    </recommendedName>
    <alternativeName>
        <fullName evidence="1">4-(phosphohydroxy)-L-threonine dehydrogenase</fullName>
    </alternativeName>
</protein>